<protein>
    <recommendedName>
        <fullName>Thymosin beta-4</fullName>
        <shortName>T beta 4</shortName>
    </recommendedName>
    <component>
        <recommendedName>
            <fullName>Hematopoietic system regulatory peptide</fullName>
        </recommendedName>
        <alternativeName>
            <fullName>Seraspenide</fullName>
        </alternativeName>
    </component>
</protein>
<accession>P34032</accession>
<dbReference type="BMRB" id="P34032"/>
<dbReference type="SMR" id="P34032"/>
<dbReference type="FunCoup" id="P34032">
    <property type="interactions" value="669"/>
</dbReference>
<dbReference type="STRING" id="9986.ENSOCUP00000025607"/>
<dbReference type="iPTMnet" id="P34032"/>
<dbReference type="InParanoid" id="P34032"/>
<dbReference type="OrthoDB" id="2151618at2759"/>
<dbReference type="Proteomes" id="UP000001811">
    <property type="component" value="Unplaced"/>
</dbReference>
<dbReference type="GO" id="GO:0005737">
    <property type="term" value="C:cytoplasm"/>
    <property type="evidence" value="ECO:0007669"/>
    <property type="project" value="UniProtKB-KW"/>
</dbReference>
<dbReference type="GO" id="GO:0005856">
    <property type="term" value="C:cytoskeleton"/>
    <property type="evidence" value="ECO:0007669"/>
    <property type="project" value="UniProtKB-SubCell"/>
</dbReference>
<dbReference type="GO" id="GO:0003785">
    <property type="term" value="F:actin monomer binding"/>
    <property type="evidence" value="ECO:0007669"/>
    <property type="project" value="InterPro"/>
</dbReference>
<dbReference type="GO" id="GO:0007015">
    <property type="term" value="P:actin filament organization"/>
    <property type="evidence" value="ECO:0007669"/>
    <property type="project" value="InterPro"/>
</dbReference>
<dbReference type="GO" id="GO:0030334">
    <property type="term" value="P:regulation of cell migration"/>
    <property type="evidence" value="ECO:0007669"/>
    <property type="project" value="TreeGrafter"/>
</dbReference>
<dbReference type="CDD" id="cd22059">
    <property type="entry name" value="WH2_BetaT"/>
    <property type="match status" value="1"/>
</dbReference>
<dbReference type="FunFam" id="1.20.5.520:FF:000001">
    <property type="entry name" value="Thymosin beta"/>
    <property type="match status" value="1"/>
</dbReference>
<dbReference type="Gene3D" id="1.20.5.520">
    <property type="entry name" value="Single helix bin"/>
    <property type="match status" value="1"/>
</dbReference>
<dbReference type="InterPro" id="IPR001152">
    <property type="entry name" value="Beta-thymosin"/>
</dbReference>
<dbReference type="InterPro" id="IPR038386">
    <property type="entry name" value="Beta-thymosin_sf"/>
</dbReference>
<dbReference type="PANTHER" id="PTHR12021">
    <property type="entry name" value="THYMOSIN BETA"/>
    <property type="match status" value="1"/>
</dbReference>
<dbReference type="PANTHER" id="PTHR12021:SF20">
    <property type="entry name" value="THYMOSIN BETA-4"/>
    <property type="match status" value="1"/>
</dbReference>
<dbReference type="Pfam" id="PF01290">
    <property type="entry name" value="Thymosin"/>
    <property type="match status" value="1"/>
</dbReference>
<dbReference type="PIRSF" id="PIRSF001828">
    <property type="entry name" value="Thymosin_beta"/>
    <property type="match status" value="1"/>
</dbReference>
<dbReference type="SMART" id="SM00152">
    <property type="entry name" value="THY"/>
    <property type="match status" value="1"/>
</dbReference>
<dbReference type="PROSITE" id="PS00500">
    <property type="entry name" value="THYMOSIN_B4"/>
    <property type="match status" value="1"/>
</dbReference>
<gene>
    <name type="primary">TMSB4</name>
</gene>
<comment type="function">
    <text evidence="1">Plays an important role in the organization of the cytoskeleton. Binds to and sequesters actin monomers (G actin) and therefore inhibits actin polymerization (By similarity).</text>
</comment>
<comment type="function">
    <text evidence="1">Seraspenide inhibits the entry of hematopoietic pluripotent stem cells into the S-phase.</text>
</comment>
<comment type="subcellular location">
    <subcellularLocation>
        <location>Cytoplasm</location>
        <location>Cytoskeleton</location>
    </subcellularLocation>
</comment>
<comment type="tissue specificity">
    <text>Originally found in thymus but it is widely distributed in many tissues.</text>
</comment>
<comment type="similarity">
    <text evidence="5">Belongs to the thymosin beta family.</text>
</comment>
<sequence length="44" mass="5037">MADKPDMAEIEKFDKSKLKKTETQEKNPLPSKETIEQEKQAGES</sequence>
<feature type="initiator methionine" description="Removed" evidence="4">
    <location>
        <position position="1"/>
    </location>
</feature>
<feature type="chain" id="PRO_0000045926" description="Thymosin beta-4">
    <location>
        <begin position="2"/>
        <end position="44"/>
    </location>
</feature>
<feature type="peptide" id="PRO_0000034300" description="Hematopoietic system regulatory peptide" evidence="1">
    <location>
        <begin position="2"/>
        <end position="5"/>
    </location>
</feature>
<feature type="region of interest" description="Disordered" evidence="3">
    <location>
        <begin position="1"/>
        <end position="44"/>
    </location>
</feature>
<feature type="compositionally biased region" description="Basic and acidic residues" evidence="3">
    <location>
        <begin position="1"/>
        <end position="25"/>
    </location>
</feature>
<feature type="compositionally biased region" description="Basic and acidic residues" evidence="3">
    <location>
        <begin position="33"/>
        <end position="44"/>
    </location>
</feature>
<feature type="modified residue" description="N-acetylalanine" evidence="4">
    <location>
        <position position="2"/>
    </location>
</feature>
<feature type="modified residue" description="N6-acetyllysine" evidence="2">
    <location>
        <position position="4"/>
    </location>
</feature>
<feature type="modified residue" description="N6-acetyllysine; alternate" evidence="2">
    <location>
        <position position="12"/>
    </location>
</feature>
<feature type="modified residue" description="Phosphothreonine" evidence="2">
    <location>
        <position position="23"/>
    </location>
</feature>
<feature type="modified residue" description="N6-acetyllysine" evidence="2">
    <location>
        <position position="26"/>
    </location>
</feature>
<feature type="modified residue" description="Phosphoserine" evidence="2">
    <location>
        <position position="31"/>
    </location>
</feature>
<feature type="modified residue" description="N6-acetyllysine" evidence="2">
    <location>
        <position position="32"/>
    </location>
</feature>
<feature type="modified residue" description="Phosphothreonine" evidence="2">
    <location>
        <position position="34"/>
    </location>
</feature>
<feature type="modified residue" description="N6-acetyllysine" evidence="2">
    <location>
        <position position="39"/>
    </location>
</feature>
<feature type="cross-link" description="Glycyl lysine isopeptide (Lys-Gly) (interchain with G-Cter in SUMO2); alternate" evidence="2">
    <location>
        <position position="12"/>
    </location>
</feature>
<evidence type="ECO:0000250" key="1"/>
<evidence type="ECO:0000250" key="2">
    <source>
        <dbReference type="UniProtKB" id="P62328"/>
    </source>
</evidence>
<evidence type="ECO:0000256" key="3">
    <source>
        <dbReference type="SAM" id="MobiDB-lite"/>
    </source>
</evidence>
<evidence type="ECO:0000269" key="4">
    <source>
    </source>
</evidence>
<evidence type="ECO:0000305" key="5"/>
<keyword id="KW-0007">Acetylation</keyword>
<keyword id="KW-0009">Actin-binding</keyword>
<keyword id="KW-0963">Cytoplasm</keyword>
<keyword id="KW-0206">Cytoskeleton</keyword>
<keyword id="KW-0903">Direct protein sequencing</keyword>
<keyword id="KW-1017">Isopeptide bond</keyword>
<keyword id="KW-0597">Phosphoprotein</keyword>
<keyword id="KW-1185">Reference proteome</keyword>
<keyword id="KW-0832">Ubl conjugation</keyword>
<proteinExistence type="evidence at protein level"/>
<reference key="1">
    <citation type="journal article" date="1983" name="Arch. Biochem. Biophys.">
        <title>Distribution of thymosin beta 4 in vertebrate classes.</title>
        <authorList>
            <person name="Erickson-Viitanen S."/>
            <person name="Ruggieri S."/>
            <person name="Natalini P."/>
            <person name="Horecker B.L."/>
        </authorList>
    </citation>
    <scope>PROTEIN SEQUENCE OF 2-44</scope>
    <scope>ACETYLATION AT ALA-2</scope>
</reference>
<organism>
    <name type="scientific">Oryctolagus cuniculus</name>
    <name type="common">Rabbit</name>
    <dbReference type="NCBI Taxonomy" id="9986"/>
    <lineage>
        <taxon>Eukaryota</taxon>
        <taxon>Metazoa</taxon>
        <taxon>Chordata</taxon>
        <taxon>Craniata</taxon>
        <taxon>Vertebrata</taxon>
        <taxon>Euteleostomi</taxon>
        <taxon>Mammalia</taxon>
        <taxon>Eutheria</taxon>
        <taxon>Euarchontoglires</taxon>
        <taxon>Glires</taxon>
        <taxon>Lagomorpha</taxon>
        <taxon>Leporidae</taxon>
        <taxon>Oryctolagus</taxon>
    </lineage>
</organism>
<name>TYB4_RABIT</name>